<dbReference type="EMBL" id="AP009240">
    <property type="protein sequence ID" value="BAG78041.1"/>
    <property type="molecule type" value="Genomic_DNA"/>
</dbReference>
<dbReference type="RefSeq" id="WP_000638031.1">
    <property type="nucleotide sequence ID" value="NC_011415.1"/>
</dbReference>
<dbReference type="SMR" id="B6I7K1"/>
<dbReference type="GeneID" id="93774916"/>
<dbReference type="KEGG" id="ecy:ECSE_2517"/>
<dbReference type="HOGENOM" id="CLU_131462_5_1_6"/>
<dbReference type="UniPathway" id="UPA00030"/>
<dbReference type="Proteomes" id="UP000008199">
    <property type="component" value="Chromosome"/>
</dbReference>
<dbReference type="GO" id="GO:0005886">
    <property type="term" value="C:plasma membrane"/>
    <property type="evidence" value="ECO:0007669"/>
    <property type="project" value="UniProtKB-SubCell"/>
</dbReference>
<dbReference type="GO" id="GO:1901505">
    <property type="term" value="F:carbohydrate derivative transmembrane transporter activity"/>
    <property type="evidence" value="ECO:0007669"/>
    <property type="project" value="InterPro"/>
</dbReference>
<dbReference type="GO" id="GO:0009245">
    <property type="term" value="P:lipid A biosynthetic process"/>
    <property type="evidence" value="ECO:0007669"/>
    <property type="project" value="UniProtKB-UniRule"/>
</dbReference>
<dbReference type="GO" id="GO:0009103">
    <property type="term" value="P:lipopolysaccharide biosynthetic process"/>
    <property type="evidence" value="ECO:0007669"/>
    <property type="project" value="UniProtKB-UniRule"/>
</dbReference>
<dbReference type="FunFam" id="1.10.3730.20:FF:000002">
    <property type="entry name" value="Probable 4-amino-4-deoxy-L-arabinose-phosphoundecaprenol flippase subunit ArnE"/>
    <property type="match status" value="1"/>
</dbReference>
<dbReference type="Gene3D" id="1.10.3730.20">
    <property type="match status" value="1"/>
</dbReference>
<dbReference type="HAMAP" id="MF_01869">
    <property type="entry name" value="Flippase_ArnE"/>
    <property type="match status" value="1"/>
</dbReference>
<dbReference type="InterPro" id="IPR000620">
    <property type="entry name" value="EamA_dom"/>
</dbReference>
<dbReference type="InterPro" id="IPR022883">
    <property type="entry name" value="Flippase_ArnE"/>
</dbReference>
<dbReference type="InterPro" id="IPR000390">
    <property type="entry name" value="Small_drug/metabolite_transptr"/>
</dbReference>
<dbReference type="NCBIfam" id="NF011625">
    <property type="entry name" value="PRK15051.1"/>
    <property type="match status" value="1"/>
</dbReference>
<dbReference type="PANTHER" id="PTHR30561:SF23">
    <property type="entry name" value="4-AMINO-4-DEOXY-L-ARABINOSE-PHOSPHOUNDECAPRENOL FLIPPASE SUBUNIT ARNE-RELATED"/>
    <property type="match status" value="1"/>
</dbReference>
<dbReference type="PANTHER" id="PTHR30561">
    <property type="entry name" value="SMR FAMILY PROTON-DEPENDENT DRUG EFFLUX TRANSPORTER SUGE"/>
    <property type="match status" value="1"/>
</dbReference>
<dbReference type="Pfam" id="PF00892">
    <property type="entry name" value="EamA"/>
    <property type="match status" value="1"/>
</dbReference>
<dbReference type="SUPFAM" id="SSF103481">
    <property type="entry name" value="Multidrug resistance efflux transporter EmrE"/>
    <property type="match status" value="1"/>
</dbReference>
<accession>B6I7K1</accession>
<protein>
    <recommendedName>
        <fullName evidence="2">Probable 4-amino-4-deoxy-L-arabinose-phosphoundecaprenol flippase subunit ArnE</fullName>
        <shortName evidence="2">L-Ara4N-phosphoundecaprenol flippase subunit ArnE</shortName>
    </recommendedName>
    <alternativeName>
        <fullName evidence="2">Undecaprenyl phosphate-aminoarabinose flippase subunit ArnE</fullName>
    </alternativeName>
</protein>
<gene>
    <name evidence="2" type="primary">arnE</name>
    <name type="ordered locus">ECSE_2517</name>
</gene>
<feature type="chain" id="PRO_0000382959" description="Probable 4-amino-4-deoxy-L-arabinose-phosphoundecaprenol flippase subunit ArnE">
    <location>
        <begin position="1"/>
        <end position="111"/>
    </location>
</feature>
<feature type="topological domain" description="Cytoplasmic" evidence="1">
    <location>
        <begin position="1"/>
        <end position="35"/>
    </location>
</feature>
<feature type="transmembrane region" description="Helical" evidence="2">
    <location>
        <begin position="36"/>
        <end position="56"/>
    </location>
</feature>
<feature type="topological domain" description="Periplasmic" evidence="1">
    <location>
        <begin position="57"/>
        <end position="60"/>
    </location>
</feature>
<feature type="transmembrane region" description="Helical" evidence="2">
    <location>
        <begin position="61"/>
        <end position="81"/>
    </location>
</feature>
<feature type="topological domain" description="Cytoplasmic" evidence="1">
    <location>
        <begin position="82"/>
        <end position="87"/>
    </location>
</feature>
<feature type="transmembrane region" description="Helical" evidence="2">
    <location>
        <begin position="88"/>
        <end position="108"/>
    </location>
</feature>
<feature type="topological domain" description="Periplasmic" evidence="1">
    <location>
        <begin position="109"/>
        <end position="111"/>
    </location>
</feature>
<feature type="domain" description="EamA" evidence="2">
    <location>
        <begin position="40"/>
        <end position="109"/>
    </location>
</feature>
<proteinExistence type="inferred from homology"/>
<sequence>MIWLTLVFASLLSVAGQLCQKQATCFVAINKRRKHIVLWLGLALACLGLAMVLWLLVLQNVPVGIAYPMLSLNFVWVTLAAVKLWHEPVSPRHWCGVAFIIGGIVILGSTV</sequence>
<evidence type="ECO:0000255" key="1"/>
<evidence type="ECO:0000255" key="2">
    <source>
        <dbReference type="HAMAP-Rule" id="MF_01869"/>
    </source>
</evidence>
<comment type="function">
    <text evidence="2">Translocates 4-amino-4-deoxy-L-arabinose-phosphoundecaprenol (alpha-L-Ara4N-phosphoundecaprenol) from the cytoplasmic to the periplasmic side of the inner membrane.</text>
</comment>
<comment type="pathway">
    <text evidence="2">Bacterial outer membrane biogenesis; lipopolysaccharide biosynthesis.</text>
</comment>
<comment type="subunit">
    <text evidence="2">Heterodimer of ArnE and ArnF.</text>
</comment>
<comment type="subcellular location">
    <subcellularLocation>
        <location evidence="2">Cell inner membrane</location>
        <topology evidence="2">Multi-pass membrane protein</topology>
    </subcellularLocation>
</comment>
<comment type="similarity">
    <text evidence="2">Belongs to the ArnE family.</text>
</comment>
<organism>
    <name type="scientific">Escherichia coli (strain SE11)</name>
    <dbReference type="NCBI Taxonomy" id="409438"/>
    <lineage>
        <taxon>Bacteria</taxon>
        <taxon>Pseudomonadati</taxon>
        <taxon>Pseudomonadota</taxon>
        <taxon>Gammaproteobacteria</taxon>
        <taxon>Enterobacterales</taxon>
        <taxon>Enterobacteriaceae</taxon>
        <taxon>Escherichia</taxon>
    </lineage>
</organism>
<name>ARNE_ECOSE</name>
<keyword id="KW-0997">Cell inner membrane</keyword>
<keyword id="KW-1003">Cell membrane</keyword>
<keyword id="KW-0441">Lipid A biosynthesis</keyword>
<keyword id="KW-0444">Lipid biosynthesis</keyword>
<keyword id="KW-0443">Lipid metabolism</keyword>
<keyword id="KW-0448">Lipopolysaccharide biosynthesis</keyword>
<keyword id="KW-0472">Membrane</keyword>
<keyword id="KW-0812">Transmembrane</keyword>
<keyword id="KW-1133">Transmembrane helix</keyword>
<keyword id="KW-0813">Transport</keyword>
<reference key="1">
    <citation type="journal article" date="2008" name="DNA Res.">
        <title>Complete genome sequence and comparative analysis of the wild-type commensal Escherichia coli strain SE11 isolated from a healthy adult.</title>
        <authorList>
            <person name="Oshima K."/>
            <person name="Toh H."/>
            <person name="Ogura Y."/>
            <person name="Sasamoto H."/>
            <person name="Morita H."/>
            <person name="Park S.-H."/>
            <person name="Ooka T."/>
            <person name="Iyoda S."/>
            <person name="Taylor T.D."/>
            <person name="Hayashi T."/>
            <person name="Itoh K."/>
            <person name="Hattori M."/>
        </authorList>
    </citation>
    <scope>NUCLEOTIDE SEQUENCE [LARGE SCALE GENOMIC DNA]</scope>
    <source>
        <strain>SE11</strain>
    </source>
</reference>